<name>CHO2_KOMPG</name>
<reference key="1">
    <citation type="journal article" date="2009" name="Nat. Biotechnol.">
        <title>Genome sequence of the recombinant protein production host Pichia pastoris.</title>
        <authorList>
            <person name="De Schutter K."/>
            <person name="Lin Y.-C."/>
            <person name="Tiels P."/>
            <person name="Van Hecke A."/>
            <person name="Glinka S."/>
            <person name="Weber-Lehmann J."/>
            <person name="Rouze P."/>
            <person name="Van de Peer Y."/>
            <person name="Callewaert N."/>
        </authorList>
    </citation>
    <scope>NUCLEOTIDE SEQUENCE [LARGE SCALE GENOMIC DNA]</scope>
    <source>
        <strain>GS115 / ATCC 20864</strain>
    </source>
</reference>
<comment type="function">
    <text evidence="1">Catalyzes the first step of the methylation pathway of phosphatidylcholine biosynthesis, the SAM-dependent methylation of phosphatidylethanolamine (PE) to phosphatidylmonomethylethanolamine (PMME).</text>
</comment>
<comment type="catalytic activity">
    <reaction evidence="1">
        <text>a 1,2-diacyl-sn-glycero-3-phosphoethanolamine + S-adenosyl-L-methionine = a 1,2-diacyl-sn-glycero-3-phospho-N-methylethanolamine + S-adenosyl-L-homocysteine + H(+)</text>
        <dbReference type="Rhea" id="RHEA:11164"/>
        <dbReference type="ChEBI" id="CHEBI:15378"/>
        <dbReference type="ChEBI" id="CHEBI:57856"/>
        <dbReference type="ChEBI" id="CHEBI:59789"/>
        <dbReference type="ChEBI" id="CHEBI:64573"/>
        <dbReference type="ChEBI" id="CHEBI:64612"/>
        <dbReference type="EC" id="2.1.1.17"/>
    </reaction>
</comment>
<comment type="pathway">
    <text evidence="1">Phospholipid metabolism; phosphatidylcholine biosynthesis.</text>
</comment>
<comment type="subcellular location">
    <subcellularLocation>
        <location evidence="1">Endoplasmic reticulum membrane</location>
        <topology evidence="1">Multi-pass membrane protein</topology>
    </subcellularLocation>
</comment>
<comment type="similarity">
    <text evidence="1">Belongs to the class VI-like SAM-binding methyltransferase superfamily. CHO2 family.</text>
</comment>
<feature type="chain" id="PRO_0000405908" description="Phosphatidylethanolamine N-methyltransferase">
    <location>
        <begin position="1"/>
        <end position="890"/>
    </location>
</feature>
<feature type="topological domain" description="Lumenal" evidence="1">
    <location>
        <begin position="1"/>
        <end position="51"/>
    </location>
</feature>
<feature type="transmembrane region" description="Helical" evidence="1">
    <location>
        <begin position="52"/>
        <end position="72"/>
    </location>
</feature>
<feature type="topological domain" description="Cytoplasmic" evidence="1">
    <location>
        <begin position="73"/>
        <end position="75"/>
    </location>
</feature>
<feature type="transmembrane region" description="Helical" evidence="1">
    <location>
        <begin position="76"/>
        <end position="96"/>
    </location>
</feature>
<feature type="topological domain" description="Lumenal" evidence="1">
    <location>
        <begin position="97"/>
        <end position="150"/>
    </location>
</feature>
<feature type="transmembrane region" description="Helical" evidence="1">
    <location>
        <begin position="151"/>
        <end position="171"/>
    </location>
</feature>
<feature type="topological domain" description="Cytoplasmic" evidence="1">
    <location>
        <begin position="172"/>
        <end position="179"/>
    </location>
</feature>
<feature type="transmembrane region" description="Helical" evidence="1">
    <location>
        <begin position="180"/>
        <end position="200"/>
    </location>
</feature>
<feature type="topological domain" description="Lumenal" evidence="1">
    <location>
        <begin position="201"/>
        <end position="227"/>
    </location>
</feature>
<feature type="transmembrane region" description="Helical" evidence="1">
    <location>
        <begin position="228"/>
        <end position="248"/>
    </location>
</feature>
<feature type="topological domain" description="Cytoplasmic" evidence="1">
    <location>
        <begin position="249"/>
        <end position="258"/>
    </location>
</feature>
<feature type="transmembrane region" description="Helical" evidence="1">
    <location>
        <begin position="259"/>
        <end position="279"/>
    </location>
</feature>
<feature type="topological domain" description="Lumenal" evidence="1">
    <location>
        <begin position="280"/>
        <end position="330"/>
    </location>
</feature>
<feature type="transmembrane region" description="Helical" evidence="1">
    <location>
        <begin position="331"/>
        <end position="351"/>
    </location>
</feature>
<feature type="topological domain" description="Cytoplasmic" evidence="1">
    <location>
        <begin position="352"/>
        <end position="354"/>
    </location>
</feature>
<feature type="transmembrane region" description="Helical" evidence="1">
    <location>
        <begin position="355"/>
        <end position="375"/>
    </location>
</feature>
<feature type="topological domain" description="Lumenal" evidence="1">
    <location>
        <begin position="376"/>
        <end position="446"/>
    </location>
</feature>
<feature type="transmembrane region" description="Helical" evidence="1">
    <location>
        <begin position="447"/>
        <end position="467"/>
    </location>
</feature>
<feature type="topological domain" description="Cytoplasmic" evidence="1">
    <location>
        <position position="468"/>
    </location>
</feature>
<feature type="transmembrane region" description="Helical" evidence="1">
    <location>
        <begin position="469"/>
        <end position="489"/>
    </location>
</feature>
<feature type="topological domain" description="Lumenal" evidence="1">
    <location>
        <begin position="490"/>
        <end position="531"/>
    </location>
</feature>
<feature type="transmembrane region" description="Helical" evidence="1">
    <location>
        <begin position="532"/>
        <end position="552"/>
    </location>
</feature>
<feature type="topological domain" description="Cytoplasmic" evidence="1">
    <location>
        <begin position="553"/>
        <end position="890"/>
    </location>
</feature>
<gene>
    <name type="primary">CHO2</name>
    <name type="ordered locus">PAS_chr1-4_0093</name>
</gene>
<evidence type="ECO:0000255" key="1">
    <source>
        <dbReference type="HAMAP-Rule" id="MF_03217"/>
    </source>
</evidence>
<sequence>MVKESKFSYNSKDEKKYSLGKTFRGDIFNVPETHDMVRSLFDPTVKKSVSDYLIVLSLFINGIVYYYSPVTWRIPVFIVLYSFWRLGYNLGIGILLYKQSKSHSMFHWLKQIQINGGWAKKFVELELSSKLNAQQLNSVPDEFKTWIVFRSLVNLILMNDFTTYMCLVFACSDGAFNQSLSLIFLRWVLGISFFIFNIIVKLNAHLIVKDYAWYWGDFFFRLHNNEELIFDGVFDLAPHPMYSIGYAGYYGCALMTKSYTVLIMSIFGHLLQFLFLNYVETPHIEKIYGDDNLSENTISVNKRDDSVFIGTGGKPLVMLTKNFNWLRTNDIFTVVLALYASIVPIFLPASYNNSIIILAIVVKIGTSFVLNSVLYLQSRFKSWTLSFIKNYGTINISILDNKELLERLSFQNWTLLQNNTLVLNYSMLFTISVREVMYNEKFWQTEWLPLRFILAALMILGQFLTVHQMIDSIGLFGWYYGDFFIGVLSSHKSEVTTLSRSGIYHFLNNPERVTSNLTVWALYLLFNNSNKIFLVIALLFTMNNLIVLNFIEKPHMVKLYGEQNVLKHTSGIEKSINSLFLPNHVQGTIVKLSGSIDKVIQDSSKVIDEFIRNKHNQKPKELSLKKRRNSFQQVIELIRGSTDDTLTINLQELNDQGQLQLLNLLRKDDTDFYNLGDPIKVEWNMEDHKGKDKAWIGLYNIFQTSETRTKTLVSSKGYWIPIHREKYINLSDKIRNEEDCILEDELNRGVVQFSAELLPWVPGTYELRLHANEKHEVLAISKPFDIVVKKIDVPTSDDIGDERLEDFANKLYQGFVSKLFPAVESIEDESNWFLQMHIKENARQVEKLCSTLSQSCGVHLTKKAIVDEKCLKDLSFKISKLRKMLDELML</sequence>
<organism>
    <name type="scientific">Komagataella phaffii (strain GS115 / ATCC 20864)</name>
    <name type="common">Yeast</name>
    <name type="synonym">Pichia pastoris</name>
    <dbReference type="NCBI Taxonomy" id="644223"/>
    <lineage>
        <taxon>Eukaryota</taxon>
        <taxon>Fungi</taxon>
        <taxon>Dikarya</taxon>
        <taxon>Ascomycota</taxon>
        <taxon>Saccharomycotina</taxon>
        <taxon>Pichiomycetes</taxon>
        <taxon>Pichiales</taxon>
        <taxon>Pichiaceae</taxon>
        <taxon>Komagataella</taxon>
    </lineage>
</organism>
<protein>
    <recommendedName>
        <fullName evidence="1">Phosphatidylethanolamine N-methyltransferase</fullName>
        <shortName evidence="1">PE methyltransferase</shortName>
        <shortName evidence="1">PEAMT</shortName>
        <shortName evidence="1">PEMT</shortName>
        <ecNumber evidence="1">2.1.1.17</ecNumber>
    </recommendedName>
</protein>
<keyword id="KW-0256">Endoplasmic reticulum</keyword>
<keyword id="KW-0444">Lipid biosynthesis</keyword>
<keyword id="KW-0443">Lipid metabolism</keyword>
<keyword id="KW-0472">Membrane</keyword>
<keyword id="KW-0489">Methyltransferase</keyword>
<keyword id="KW-0594">Phospholipid biosynthesis</keyword>
<keyword id="KW-1208">Phospholipid metabolism</keyword>
<keyword id="KW-1185">Reference proteome</keyword>
<keyword id="KW-0949">S-adenosyl-L-methionine</keyword>
<keyword id="KW-0808">Transferase</keyword>
<keyword id="KW-0812">Transmembrane</keyword>
<keyword id="KW-1133">Transmembrane helix</keyword>
<proteinExistence type="inferred from homology"/>
<dbReference type="EC" id="2.1.1.17" evidence="1"/>
<dbReference type="EMBL" id="FN392319">
    <property type="protein sequence ID" value="CAY67922.1"/>
    <property type="molecule type" value="Genomic_DNA"/>
</dbReference>
<dbReference type="RefSeq" id="XP_002490203.1">
    <property type="nucleotide sequence ID" value="XM_002490158.1"/>
</dbReference>
<dbReference type="FunCoup" id="C4QXE9">
    <property type="interactions" value="76"/>
</dbReference>
<dbReference type="STRING" id="644223.C4QXE9"/>
<dbReference type="EnsemblFungi" id="CAY67922">
    <property type="protein sequence ID" value="CAY67922"/>
    <property type="gene ID" value="PAS_chr1-4_0093"/>
</dbReference>
<dbReference type="GeneID" id="8197310"/>
<dbReference type="KEGG" id="ppa:PAS_chr1-4_0093"/>
<dbReference type="eggNOG" id="ENOG502QRGH">
    <property type="taxonomic scope" value="Eukaryota"/>
</dbReference>
<dbReference type="HOGENOM" id="CLU_005987_0_1_1"/>
<dbReference type="InParanoid" id="C4QXE9"/>
<dbReference type="OMA" id="RIWYSVG"/>
<dbReference type="OrthoDB" id="4583at2759"/>
<dbReference type="UniPathway" id="UPA00753"/>
<dbReference type="Proteomes" id="UP000000314">
    <property type="component" value="Chromosome 1"/>
</dbReference>
<dbReference type="GO" id="GO:0005789">
    <property type="term" value="C:endoplasmic reticulum membrane"/>
    <property type="evidence" value="ECO:0007669"/>
    <property type="project" value="UniProtKB-SubCell"/>
</dbReference>
<dbReference type="GO" id="GO:0004608">
    <property type="term" value="F:phosphatidylethanolamine N-methyltransferase activity"/>
    <property type="evidence" value="ECO:0007669"/>
    <property type="project" value="UniProtKB-UniRule"/>
</dbReference>
<dbReference type="GO" id="GO:0032259">
    <property type="term" value="P:methylation"/>
    <property type="evidence" value="ECO:0007669"/>
    <property type="project" value="UniProtKB-KW"/>
</dbReference>
<dbReference type="GO" id="GO:0006656">
    <property type="term" value="P:phosphatidylcholine biosynthetic process"/>
    <property type="evidence" value="ECO:0007669"/>
    <property type="project" value="UniProtKB-UniRule"/>
</dbReference>
<dbReference type="Gene3D" id="1.20.120.1630">
    <property type="match status" value="1"/>
</dbReference>
<dbReference type="Gene3D" id="2.60.40.2840">
    <property type="match status" value="1"/>
</dbReference>
<dbReference type="HAMAP" id="MF_03217">
    <property type="entry name" value="PEMT"/>
    <property type="match status" value="1"/>
</dbReference>
<dbReference type="InterPro" id="IPR007318">
    <property type="entry name" value="Phopholipid_MeTrfase"/>
</dbReference>
<dbReference type="InterPro" id="IPR016219">
    <property type="entry name" value="Phosphatid-EA_MeTrfase_fun"/>
</dbReference>
<dbReference type="PANTHER" id="PTHR32138">
    <property type="entry name" value="PHOSPHATIDYLETHANOLAMINE N-METHYLTRANSFERASE"/>
    <property type="match status" value="1"/>
</dbReference>
<dbReference type="PANTHER" id="PTHR32138:SF0">
    <property type="entry name" value="PHOSPHATIDYLETHANOLAMINE N-METHYLTRANSFERASE"/>
    <property type="match status" value="1"/>
</dbReference>
<dbReference type="Pfam" id="PF04191">
    <property type="entry name" value="PEMT"/>
    <property type="match status" value="2"/>
</dbReference>
<dbReference type="PIRSF" id="PIRSF000383">
    <property type="entry name" value="PEAMT"/>
    <property type="match status" value="1"/>
</dbReference>
<dbReference type="PROSITE" id="PS51598">
    <property type="entry name" value="SAM_CHO2"/>
    <property type="match status" value="1"/>
</dbReference>
<accession>C4QXE9</accession>